<accession>P22274</accession>
<accession>A0A1D8PTU0</accession>
<accession>Q5A316</accession>
<sequence>MGLTISKLFASLLGRREMRILMVGLDAAGKTTILYKLKLGEIVTTIPTIGFNVETVEYKNISFTVWDVGGQDKIRPLWRYYFQNTQGIIFVVDSNDRDRINEAREELQSMLNEDELKDAVLLVLANKQDLPNAMNAAEITEKMGLHSIRNRPWFIQATCATTGDGLYEGLEWLSNQVGK</sequence>
<evidence type="ECO:0000250" key="1"/>
<evidence type="ECO:0000305" key="2"/>
<evidence type="ECO:0007829" key="3">
    <source>
        <dbReference type="PDB" id="6PTA"/>
    </source>
</evidence>
<gene>
    <name type="primary">ARF1</name>
    <name type="ordered locus">CAALFM_CR08700CA</name>
    <name type="ORF">CaO19.13805</name>
    <name type="ORF">CaO19.6447</name>
</gene>
<feature type="initiator methionine" description="Removed" evidence="1">
    <location>
        <position position="1"/>
    </location>
</feature>
<feature type="chain" id="PRO_0000207412" description="ADP-ribosylation factor">
    <location>
        <begin position="2"/>
        <end position="179"/>
    </location>
</feature>
<feature type="binding site" evidence="1">
    <location>
        <begin position="24"/>
        <end position="31"/>
    </location>
    <ligand>
        <name>GTP</name>
        <dbReference type="ChEBI" id="CHEBI:37565"/>
    </ligand>
</feature>
<feature type="binding site" evidence="1">
    <location>
        <begin position="67"/>
        <end position="71"/>
    </location>
    <ligand>
        <name>GTP</name>
        <dbReference type="ChEBI" id="CHEBI:37565"/>
    </ligand>
</feature>
<feature type="binding site" evidence="1">
    <location>
        <begin position="126"/>
        <end position="129"/>
    </location>
    <ligand>
        <name>GTP</name>
        <dbReference type="ChEBI" id="CHEBI:37565"/>
    </ligand>
</feature>
<feature type="lipid moiety-binding region" description="N-myristoyl glycine" evidence="1">
    <location>
        <position position="2"/>
    </location>
</feature>
<feature type="sequence conflict" description="In Ref. 1; AAA64266." evidence="2" ref="1">
    <original>R</original>
    <variation>M</variation>
    <location>
        <position position="149"/>
    </location>
</feature>
<feature type="helix" evidence="3">
    <location>
        <begin position="9"/>
        <end position="12"/>
    </location>
</feature>
<feature type="strand" evidence="3">
    <location>
        <begin position="19"/>
        <end position="25"/>
    </location>
</feature>
<feature type="helix" evidence="3">
    <location>
        <begin position="30"/>
        <end position="37"/>
    </location>
</feature>
<feature type="strand" evidence="3">
    <location>
        <begin position="42"/>
        <end position="45"/>
    </location>
</feature>
<feature type="strand" evidence="3">
    <location>
        <begin position="53"/>
        <end position="58"/>
    </location>
</feature>
<feature type="strand" evidence="3">
    <location>
        <begin position="61"/>
        <end position="67"/>
    </location>
</feature>
<feature type="helix" evidence="3">
    <location>
        <begin position="78"/>
        <end position="82"/>
    </location>
</feature>
<feature type="strand" evidence="3">
    <location>
        <begin position="85"/>
        <end position="93"/>
    </location>
</feature>
<feature type="helix" evidence="3">
    <location>
        <begin position="97"/>
        <end position="99"/>
    </location>
</feature>
<feature type="helix" evidence="3">
    <location>
        <begin position="100"/>
        <end position="111"/>
    </location>
</feature>
<feature type="helix" evidence="3">
    <location>
        <begin position="114"/>
        <end position="116"/>
    </location>
</feature>
<feature type="strand" evidence="3">
    <location>
        <begin position="119"/>
        <end position="126"/>
    </location>
</feature>
<feature type="helix" evidence="3">
    <location>
        <begin position="136"/>
        <end position="142"/>
    </location>
</feature>
<feature type="helix" evidence="3">
    <location>
        <begin position="145"/>
        <end position="147"/>
    </location>
</feature>
<feature type="strand" evidence="3">
    <location>
        <begin position="153"/>
        <end position="157"/>
    </location>
</feature>
<feature type="turn" evidence="3">
    <location>
        <begin position="160"/>
        <end position="162"/>
    </location>
</feature>
<feature type="helix" evidence="3">
    <location>
        <begin position="166"/>
        <end position="177"/>
    </location>
</feature>
<reference key="1">
    <citation type="journal article" date="1992" name="Gene">
        <title>Cloning and characterization of the gene encoding the ADP-ribosylation factor in Candida albicans.</title>
        <authorList>
            <person name="Denich K."/>
            <person name="Malloy P.J."/>
            <person name="Feldman D."/>
        </authorList>
    </citation>
    <scope>NUCLEOTIDE SEQUENCE [GENOMIC DNA]</scope>
</reference>
<reference key="2">
    <citation type="journal article" date="1992" name="J. Biol. Chem.">
        <title>4-oxatetradecanoic acid is fungicidal for Cryptococcus neoformans and inhibits replication of human immunodeficiency virus I.</title>
        <authorList>
            <person name="Langner C.A."/>
            <person name="Lodge J.K."/>
            <person name="Travis S.J."/>
            <person name="Caldwell J.E."/>
            <person name="Lu T."/>
            <person name="Li Q."/>
            <person name="Bryant M.L."/>
            <person name="Devadas B."/>
            <person name="Gokel G.W."/>
            <person name="Kobayashi G.S."/>
        </authorList>
    </citation>
    <scope>NUCLEOTIDE SEQUENCE [GENOMIC DNA]</scope>
</reference>
<reference key="3">
    <citation type="journal article" date="2004" name="Proc. Natl. Acad. Sci. U.S.A.">
        <title>The diploid genome sequence of Candida albicans.</title>
        <authorList>
            <person name="Jones T."/>
            <person name="Federspiel N.A."/>
            <person name="Chibana H."/>
            <person name="Dungan J."/>
            <person name="Kalman S."/>
            <person name="Magee B.B."/>
            <person name="Newport G."/>
            <person name="Thorstenson Y.R."/>
            <person name="Agabian N."/>
            <person name="Magee P.T."/>
            <person name="Davis R.W."/>
            <person name="Scherer S."/>
        </authorList>
    </citation>
    <scope>NUCLEOTIDE SEQUENCE [LARGE SCALE GENOMIC DNA]</scope>
    <source>
        <strain>SC5314 / ATCC MYA-2876</strain>
    </source>
</reference>
<reference key="4">
    <citation type="journal article" date="2007" name="Genome Biol.">
        <title>Assembly of the Candida albicans genome into sixteen supercontigs aligned on the eight chromosomes.</title>
        <authorList>
            <person name="van het Hoog M."/>
            <person name="Rast T.J."/>
            <person name="Martchenko M."/>
            <person name="Grindle S."/>
            <person name="Dignard D."/>
            <person name="Hogues H."/>
            <person name="Cuomo C."/>
            <person name="Berriman M."/>
            <person name="Scherer S."/>
            <person name="Magee B.B."/>
            <person name="Whiteway M."/>
            <person name="Chibana H."/>
            <person name="Nantel A."/>
            <person name="Magee P.T."/>
        </authorList>
    </citation>
    <scope>GENOME REANNOTATION</scope>
    <source>
        <strain>SC5314 / ATCC MYA-2876</strain>
    </source>
</reference>
<reference key="5">
    <citation type="journal article" date="2013" name="Genome Biol.">
        <title>Assembly of a phased diploid Candida albicans genome facilitates allele-specific measurements and provides a simple model for repeat and indel structure.</title>
        <authorList>
            <person name="Muzzey D."/>
            <person name="Schwartz K."/>
            <person name="Weissman J.S."/>
            <person name="Sherlock G."/>
        </authorList>
    </citation>
    <scope>NUCLEOTIDE SEQUENCE [LARGE SCALE GENOMIC DNA]</scope>
    <scope>GENOME REANNOTATION</scope>
    <source>
        <strain>SC5314 / ATCC MYA-2876</strain>
    </source>
</reference>
<keyword id="KW-0002">3D-structure</keyword>
<keyword id="KW-0931">ER-Golgi transport</keyword>
<keyword id="KW-0333">Golgi apparatus</keyword>
<keyword id="KW-0342">GTP-binding</keyword>
<keyword id="KW-0449">Lipoprotein</keyword>
<keyword id="KW-0519">Myristate</keyword>
<keyword id="KW-0547">Nucleotide-binding</keyword>
<keyword id="KW-0653">Protein transport</keyword>
<keyword id="KW-1185">Reference proteome</keyword>
<keyword id="KW-0813">Transport</keyword>
<name>ARF_CANAL</name>
<proteinExistence type="evidence at protein level"/>
<dbReference type="EMBL" id="M54910">
    <property type="protein sequence ID" value="AAA64266.1"/>
    <property type="molecule type" value="Genomic_DNA"/>
</dbReference>
<dbReference type="EMBL" id="S43354">
    <property type="protein sequence ID" value="AAB23053.2"/>
    <property type="molecule type" value="Genomic_DNA"/>
</dbReference>
<dbReference type="EMBL" id="CP017630">
    <property type="protein sequence ID" value="AOW31549.1"/>
    <property type="molecule type" value="Genomic_DNA"/>
</dbReference>
<dbReference type="PIR" id="JH0260">
    <property type="entry name" value="JH0260"/>
</dbReference>
<dbReference type="RefSeq" id="XP_716284.1">
    <property type="nucleotide sequence ID" value="XM_711191.1"/>
</dbReference>
<dbReference type="PDB" id="6PTA">
    <property type="method" value="X-ray"/>
    <property type="resolution" value="2.50 A"/>
    <property type="chains" value="A/B/C/D=1-179"/>
</dbReference>
<dbReference type="PDBsum" id="6PTA"/>
<dbReference type="SMR" id="P22274"/>
<dbReference type="FunCoup" id="P22274">
    <property type="interactions" value="1220"/>
</dbReference>
<dbReference type="STRING" id="237561.P22274"/>
<dbReference type="EnsemblFungi" id="CR_08700C_A-T">
    <property type="protein sequence ID" value="CR_08700C_A-T-p1"/>
    <property type="gene ID" value="CR_08700C_A"/>
</dbReference>
<dbReference type="GeneID" id="3642130"/>
<dbReference type="KEGG" id="cal:CAALFM_CR08700CA"/>
<dbReference type="CGD" id="CAL0000186453">
    <property type="gene designation" value="ARF1"/>
</dbReference>
<dbReference type="VEuPathDB" id="FungiDB:CR_08700C_A"/>
<dbReference type="eggNOG" id="KOG0070">
    <property type="taxonomic scope" value="Eukaryota"/>
</dbReference>
<dbReference type="HOGENOM" id="CLU_040729_9_3_1"/>
<dbReference type="InParanoid" id="P22274"/>
<dbReference type="OMA" id="IRQRHWF"/>
<dbReference type="OrthoDB" id="2011769at2759"/>
<dbReference type="PRO" id="PR:P22274"/>
<dbReference type="Proteomes" id="UP000000559">
    <property type="component" value="Chromosome R"/>
</dbReference>
<dbReference type="GO" id="GO:0005737">
    <property type="term" value="C:cytoplasm"/>
    <property type="evidence" value="ECO:0000318"/>
    <property type="project" value="GO_Central"/>
</dbReference>
<dbReference type="GO" id="GO:0005794">
    <property type="term" value="C:Golgi apparatus"/>
    <property type="evidence" value="ECO:0000314"/>
    <property type="project" value="CGD"/>
</dbReference>
<dbReference type="GO" id="GO:0005886">
    <property type="term" value="C:plasma membrane"/>
    <property type="evidence" value="ECO:0000318"/>
    <property type="project" value="GO_Central"/>
</dbReference>
<dbReference type="GO" id="GO:0005525">
    <property type="term" value="F:GTP binding"/>
    <property type="evidence" value="ECO:0000318"/>
    <property type="project" value="GO_Central"/>
</dbReference>
<dbReference type="GO" id="GO:0003924">
    <property type="term" value="F:GTPase activity"/>
    <property type="evidence" value="ECO:0007669"/>
    <property type="project" value="InterPro"/>
</dbReference>
<dbReference type="GO" id="GO:0034614">
    <property type="term" value="P:cellular response to reactive oxygen species"/>
    <property type="evidence" value="ECO:0000315"/>
    <property type="project" value="CGD"/>
</dbReference>
<dbReference type="GO" id="GO:0006886">
    <property type="term" value="P:intracellular protein transport"/>
    <property type="evidence" value="ECO:0000315"/>
    <property type="project" value="CGD"/>
</dbReference>
<dbReference type="GO" id="GO:0016192">
    <property type="term" value="P:vesicle-mediated transport"/>
    <property type="evidence" value="ECO:0000318"/>
    <property type="project" value="GO_Central"/>
</dbReference>
<dbReference type="CDD" id="cd04150">
    <property type="entry name" value="Arf1_5_like"/>
    <property type="match status" value="1"/>
</dbReference>
<dbReference type="FunFam" id="3.40.50.300:FF:003500">
    <property type="entry name" value="ADP-ribosylation factor 1"/>
    <property type="match status" value="1"/>
</dbReference>
<dbReference type="Gene3D" id="3.40.50.300">
    <property type="entry name" value="P-loop containing nucleotide triphosphate hydrolases"/>
    <property type="match status" value="1"/>
</dbReference>
<dbReference type="InterPro" id="IPR045872">
    <property type="entry name" value="Arf1-5-like"/>
</dbReference>
<dbReference type="InterPro" id="IPR027417">
    <property type="entry name" value="P-loop_NTPase"/>
</dbReference>
<dbReference type="InterPro" id="IPR005225">
    <property type="entry name" value="Small_GTP-bd"/>
</dbReference>
<dbReference type="InterPro" id="IPR024156">
    <property type="entry name" value="Small_GTPase_ARF"/>
</dbReference>
<dbReference type="InterPro" id="IPR006689">
    <property type="entry name" value="Small_GTPase_ARF/SAR"/>
</dbReference>
<dbReference type="NCBIfam" id="TIGR00231">
    <property type="entry name" value="small_GTP"/>
    <property type="match status" value="1"/>
</dbReference>
<dbReference type="PANTHER" id="PTHR11711">
    <property type="entry name" value="ADP RIBOSYLATION FACTOR-RELATED"/>
    <property type="match status" value="1"/>
</dbReference>
<dbReference type="Pfam" id="PF00025">
    <property type="entry name" value="Arf"/>
    <property type="match status" value="1"/>
</dbReference>
<dbReference type="PRINTS" id="PR00328">
    <property type="entry name" value="SAR1GTPBP"/>
</dbReference>
<dbReference type="SMART" id="SM00177">
    <property type="entry name" value="ARF"/>
    <property type="match status" value="1"/>
</dbReference>
<dbReference type="SMART" id="SM00175">
    <property type="entry name" value="RAB"/>
    <property type="match status" value="1"/>
</dbReference>
<dbReference type="SMART" id="SM00178">
    <property type="entry name" value="SAR"/>
    <property type="match status" value="1"/>
</dbReference>
<dbReference type="SUPFAM" id="SSF52540">
    <property type="entry name" value="P-loop containing nucleoside triphosphate hydrolases"/>
    <property type="match status" value="1"/>
</dbReference>
<dbReference type="PROSITE" id="PS51417">
    <property type="entry name" value="ARF"/>
    <property type="match status" value="1"/>
</dbReference>
<protein>
    <recommendedName>
        <fullName>ADP-ribosylation factor</fullName>
    </recommendedName>
</protein>
<comment type="function">
    <text>GTP-binding protein involved in protein trafficking; may modulate vesicle budding and uncoating within the Golgi apparatus.</text>
</comment>
<comment type="subcellular location">
    <subcellularLocation>
        <location>Golgi apparatus</location>
    </subcellularLocation>
</comment>
<comment type="similarity">
    <text evidence="2">Belongs to the small GTPase superfamily. Arf family.</text>
</comment>
<organism>
    <name type="scientific">Candida albicans (strain SC5314 / ATCC MYA-2876)</name>
    <name type="common">Yeast</name>
    <dbReference type="NCBI Taxonomy" id="237561"/>
    <lineage>
        <taxon>Eukaryota</taxon>
        <taxon>Fungi</taxon>
        <taxon>Dikarya</taxon>
        <taxon>Ascomycota</taxon>
        <taxon>Saccharomycotina</taxon>
        <taxon>Pichiomycetes</taxon>
        <taxon>Debaryomycetaceae</taxon>
        <taxon>Candida/Lodderomyces clade</taxon>
        <taxon>Candida</taxon>
    </lineage>
</organism>